<organism>
    <name type="scientific">Escherichia coli (strain K12)</name>
    <dbReference type="NCBI Taxonomy" id="83333"/>
    <lineage>
        <taxon>Bacteria</taxon>
        <taxon>Pseudomonadati</taxon>
        <taxon>Pseudomonadota</taxon>
        <taxon>Gammaproteobacteria</taxon>
        <taxon>Enterobacterales</taxon>
        <taxon>Enterobacteriaceae</taxon>
        <taxon>Escherichia</taxon>
    </lineage>
</organism>
<proteinExistence type="evidence at protein level"/>
<protein>
    <recommendedName>
        <fullName>Anaerobic nitric oxide reductase transcription regulator NorR</fullName>
    </recommendedName>
</protein>
<comment type="function">
    <text evidence="3 4">Required for the expression of anaerobic nitric oxide (NO) reductase, acts as a transcriptional activator for at least the norVW operon. Activation also requires sigma-54. Not required for induction of the aerobic NO-detoxifying enzyme NO dioxygenase. Binds to the promoter region of norVW, to a consensus target sequence, GT-(N7)-AC, which is highly conserved among proteobacteria.</text>
</comment>
<comment type="pathway">
    <text>Nitrogen metabolism; nitric oxide reduction.</text>
</comment>
<comment type="induction">
    <text>By anaerobic conditions, however not induced by NO alone.</text>
</comment>
<comment type="domain">
    <text>Deletion of amino acids 30-164 allows induction of NO reductase activity even in the absence of NO, i.e. the need for an NO-induced signal has been bypassed.</text>
</comment>
<comment type="sequence caution" evidence="5">
    <conflict type="frameshift">
        <sequence resource="EMBL-CDS" id="AAA69218"/>
    </conflict>
</comment>
<comment type="sequence caution" evidence="5">
    <conflict type="frameshift">
        <sequence resource="EMBL-CDS" id="AAA69219"/>
    </conflict>
</comment>
<comment type="sequence caution" evidence="5">
    <conflict type="erroneous initiation">
        <sequence resource="EMBL-CDS" id="AAA92665"/>
    </conflict>
    <text>Extended N-terminus.</text>
</comment>
<name>NORR_ECOLI</name>
<gene>
    <name type="primary">norR</name>
    <name type="synonym">ygaA</name>
    <name type="ordered locus">b2709</name>
    <name type="ordered locus">JW5843</name>
</gene>
<dbReference type="EMBL" id="U03846">
    <property type="protein sequence ID" value="AAA92665.1"/>
    <property type="status" value="ALT_INIT"/>
    <property type="molecule type" value="Genomic_DNA"/>
</dbReference>
<dbReference type="EMBL" id="U03846">
    <property type="protein sequence ID" value="AAA92666.1"/>
    <property type="molecule type" value="Genomic_DNA"/>
</dbReference>
<dbReference type="EMBL" id="D28595">
    <property type="protein sequence ID" value="BAA05931.1"/>
    <property type="molecule type" value="Genomic_DNA"/>
</dbReference>
<dbReference type="EMBL" id="U29579">
    <property type="protein sequence ID" value="AAA69219.1"/>
    <property type="status" value="ALT_FRAME"/>
    <property type="molecule type" value="Genomic_DNA"/>
</dbReference>
<dbReference type="EMBL" id="U29579">
    <property type="protein sequence ID" value="AAA69218.1"/>
    <property type="status" value="ALT_FRAME"/>
    <property type="molecule type" value="Genomic_DNA"/>
</dbReference>
<dbReference type="EMBL" id="U00096">
    <property type="protein sequence ID" value="AAC75751.2"/>
    <property type="molecule type" value="Genomic_DNA"/>
</dbReference>
<dbReference type="EMBL" id="AP009048">
    <property type="protein sequence ID" value="BAE76786.1"/>
    <property type="molecule type" value="Genomic_DNA"/>
</dbReference>
<dbReference type="PIR" id="A65051">
    <property type="entry name" value="A65051"/>
</dbReference>
<dbReference type="RefSeq" id="NP_417189.2">
    <property type="nucleotide sequence ID" value="NC_000913.3"/>
</dbReference>
<dbReference type="RefSeq" id="WP_000010749.1">
    <property type="nucleotide sequence ID" value="NZ_LN832404.1"/>
</dbReference>
<dbReference type="SMR" id="P37013"/>
<dbReference type="BioGRID" id="4262260">
    <property type="interactions" value="109"/>
</dbReference>
<dbReference type="DIP" id="DIP-12092N"/>
<dbReference type="FunCoup" id="P37013">
    <property type="interactions" value="23"/>
</dbReference>
<dbReference type="STRING" id="511145.b2709"/>
<dbReference type="PaxDb" id="511145-b2709"/>
<dbReference type="EnsemblBacteria" id="AAC75751">
    <property type="protein sequence ID" value="AAC75751"/>
    <property type="gene ID" value="b2709"/>
</dbReference>
<dbReference type="GeneID" id="947186"/>
<dbReference type="KEGG" id="ecj:JW5843"/>
<dbReference type="KEGG" id="eco:b2709"/>
<dbReference type="KEGG" id="ecoc:C3026_14910"/>
<dbReference type="PATRIC" id="fig|1411691.4.peg.4033"/>
<dbReference type="EchoBASE" id="EB2032"/>
<dbReference type="eggNOG" id="COG3604">
    <property type="taxonomic scope" value="Bacteria"/>
</dbReference>
<dbReference type="HOGENOM" id="CLU_000445_125_0_6"/>
<dbReference type="InParanoid" id="P37013"/>
<dbReference type="OMA" id="LRYEAHQ"/>
<dbReference type="OrthoDB" id="9804019at2"/>
<dbReference type="PhylomeDB" id="P37013"/>
<dbReference type="BioCyc" id="EcoCyc:EG12108-MONOMER"/>
<dbReference type="UniPathway" id="UPA00638"/>
<dbReference type="PRO" id="PR:P37013"/>
<dbReference type="Proteomes" id="UP000000625">
    <property type="component" value="Chromosome"/>
</dbReference>
<dbReference type="GO" id="GO:0032993">
    <property type="term" value="C:protein-DNA complex"/>
    <property type="evidence" value="ECO:0000318"/>
    <property type="project" value="GO_Central"/>
</dbReference>
<dbReference type="GO" id="GO:0005524">
    <property type="term" value="F:ATP binding"/>
    <property type="evidence" value="ECO:0007669"/>
    <property type="project" value="UniProtKB-UniRule"/>
</dbReference>
<dbReference type="GO" id="GO:0016887">
    <property type="term" value="F:ATP hydrolysis activity"/>
    <property type="evidence" value="ECO:0007669"/>
    <property type="project" value="InterPro"/>
</dbReference>
<dbReference type="GO" id="GO:0000987">
    <property type="term" value="F:cis-regulatory region sequence-specific DNA binding"/>
    <property type="evidence" value="ECO:0000314"/>
    <property type="project" value="EcoCyc"/>
</dbReference>
<dbReference type="GO" id="GO:0001216">
    <property type="term" value="F:DNA-binding transcription activator activity"/>
    <property type="evidence" value="ECO:0000318"/>
    <property type="project" value="GO_Central"/>
</dbReference>
<dbReference type="GO" id="GO:0003700">
    <property type="term" value="F:DNA-binding transcription factor activity"/>
    <property type="evidence" value="ECO:0000314"/>
    <property type="project" value="EcoCyc"/>
</dbReference>
<dbReference type="GO" id="GO:0008198">
    <property type="term" value="F:ferrous iron binding"/>
    <property type="evidence" value="ECO:0000314"/>
    <property type="project" value="EcoCyc"/>
</dbReference>
<dbReference type="GO" id="GO:0042802">
    <property type="term" value="F:identical protein binding"/>
    <property type="evidence" value="ECO:0000314"/>
    <property type="project" value="EcoCyc"/>
</dbReference>
<dbReference type="GO" id="GO:0070026">
    <property type="term" value="F:nitric oxide binding"/>
    <property type="evidence" value="ECO:0000314"/>
    <property type="project" value="EcoCyc"/>
</dbReference>
<dbReference type="GO" id="GO:0000160">
    <property type="term" value="P:phosphorelay signal transduction system"/>
    <property type="evidence" value="ECO:0007669"/>
    <property type="project" value="UniProtKB-UniRule"/>
</dbReference>
<dbReference type="GO" id="GO:0045893">
    <property type="term" value="P:positive regulation of DNA-templated transcription"/>
    <property type="evidence" value="ECO:0000318"/>
    <property type="project" value="GO_Central"/>
</dbReference>
<dbReference type="GO" id="GO:2000144">
    <property type="term" value="P:positive regulation of DNA-templated transcription initiation"/>
    <property type="evidence" value="ECO:0000314"/>
    <property type="project" value="EcoCyc"/>
</dbReference>
<dbReference type="CDD" id="cd00009">
    <property type="entry name" value="AAA"/>
    <property type="match status" value="1"/>
</dbReference>
<dbReference type="FunFam" id="1.10.10.60:FF:000188">
    <property type="entry name" value="Anaerobic nitric oxide reductase transcription regulator NorR"/>
    <property type="match status" value="1"/>
</dbReference>
<dbReference type="FunFam" id="1.10.8.60:FF:000045">
    <property type="entry name" value="Anaerobic nitric oxide reductase transcription regulator NorR"/>
    <property type="match status" value="1"/>
</dbReference>
<dbReference type="FunFam" id="3.30.450.40:FF:000021">
    <property type="entry name" value="Anaerobic nitric oxide reductase transcription regulator NorR"/>
    <property type="match status" value="1"/>
</dbReference>
<dbReference type="FunFam" id="3.40.50.300:FF:000006">
    <property type="entry name" value="DNA-binding transcriptional regulator NtrC"/>
    <property type="match status" value="1"/>
</dbReference>
<dbReference type="Gene3D" id="1.10.8.60">
    <property type="match status" value="1"/>
</dbReference>
<dbReference type="Gene3D" id="3.30.450.40">
    <property type="match status" value="1"/>
</dbReference>
<dbReference type="Gene3D" id="1.10.10.60">
    <property type="entry name" value="Homeodomain-like"/>
    <property type="match status" value="1"/>
</dbReference>
<dbReference type="Gene3D" id="3.40.50.300">
    <property type="entry name" value="P-loop containing nucleotide triphosphate hydrolases"/>
    <property type="match status" value="1"/>
</dbReference>
<dbReference type="HAMAP" id="MF_01314">
    <property type="entry name" value="NorR"/>
    <property type="match status" value="1"/>
</dbReference>
<dbReference type="InterPro" id="IPR003593">
    <property type="entry name" value="AAA+_ATPase"/>
</dbReference>
<dbReference type="InterPro" id="IPR003018">
    <property type="entry name" value="GAF"/>
</dbReference>
<dbReference type="InterPro" id="IPR029016">
    <property type="entry name" value="GAF-like_dom_sf"/>
</dbReference>
<dbReference type="InterPro" id="IPR009057">
    <property type="entry name" value="Homeodomain-like_sf"/>
</dbReference>
<dbReference type="InterPro" id="IPR023944">
    <property type="entry name" value="NorR"/>
</dbReference>
<dbReference type="InterPro" id="IPR027417">
    <property type="entry name" value="P-loop_NTPase"/>
</dbReference>
<dbReference type="InterPro" id="IPR002078">
    <property type="entry name" value="Sigma_54_int"/>
</dbReference>
<dbReference type="InterPro" id="IPR025662">
    <property type="entry name" value="Sigma_54_int_dom_ATP-bd_1"/>
</dbReference>
<dbReference type="InterPro" id="IPR025943">
    <property type="entry name" value="Sigma_54_int_dom_ATP-bd_2"/>
</dbReference>
<dbReference type="InterPro" id="IPR025944">
    <property type="entry name" value="Sigma_54_int_dom_CS"/>
</dbReference>
<dbReference type="NCBIfam" id="NF003451">
    <property type="entry name" value="PRK05022.1"/>
    <property type="match status" value="1"/>
</dbReference>
<dbReference type="PANTHER" id="PTHR32071:SF35">
    <property type="entry name" value="ANAEROBIC NITRIC OXIDE REDUCTASE TRANSCRIPTION REGULATOR NORR"/>
    <property type="match status" value="1"/>
</dbReference>
<dbReference type="PANTHER" id="PTHR32071">
    <property type="entry name" value="TRANSCRIPTIONAL REGULATORY PROTEIN"/>
    <property type="match status" value="1"/>
</dbReference>
<dbReference type="Pfam" id="PF01590">
    <property type="entry name" value="GAF"/>
    <property type="match status" value="1"/>
</dbReference>
<dbReference type="Pfam" id="PF00158">
    <property type="entry name" value="Sigma54_activat"/>
    <property type="match status" value="1"/>
</dbReference>
<dbReference type="SMART" id="SM00382">
    <property type="entry name" value="AAA"/>
    <property type="match status" value="1"/>
</dbReference>
<dbReference type="SMART" id="SM00065">
    <property type="entry name" value="GAF"/>
    <property type="match status" value="1"/>
</dbReference>
<dbReference type="SUPFAM" id="SSF55781">
    <property type="entry name" value="GAF domain-like"/>
    <property type="match status" value="1"/>
</dbReference>
<dbReference type="SUPFAM" id="SSF46689">
    <property type="entry name" value="Homeodomain-like"/>
    <property type="match status" value="1"/>
</dbReference>
<dbReference type="SUPFAM" id="SSF52540">
    <property type="entry name" value="P-loop containing nucleoside triphosphate hydrolases"/>
    <property type="match status" value="1"/>
</dbReference>
<dbReference type="PROSITE" id="PS00675">
    <property type="entry name" value="SIGMA54_INTERACT_1"/>
    <property type="match status" value="1"/>
</dbReference>
<dbReference type="PROSITE" id="PS00676">
    <property type="entry name" value="SIGMA54_INTERACT_2"/>
    <property type="match status" value="1"/>
</dbReference>
<dbReference type="PROSITE" id="PS00688">
    <property type="entry name" value="SIGMA54_INTERACT_3"/>
    <property type="match status" value="1"/>
</dbReference>
<dbReference type="PROSITE" id="PS50045">
    <property type="entry name" value="SIGMA54_INTERACT_4"/>
    <property type="match status" value="1"/>
</dbReference>
<keyword id="KW-0067">ATP-binding</keyword>
<keyword id="KW-0238">DNA-binding</keyword>
<keyword id="KW-0547">Nucleotide-binding</keyword>
<keyword id="KW-0597">Phosphoprotein</keyword>
<keyword id="KW-1185">Reference proteome</keyword>
<keyword id="KW-0804">Transcription</keyword>
<keyword id="KW-0805">Transcription regulation</keyword>
<sequence>MSFSVDVLANIAIELQRGIGHQDRFQRLITTLRQVLECDASALLRYDSRQFIPLAIDGLAKDVLGRRFALEGHPRLEAIARAGDVVRFPADSELPDPYDGLIPGQESLKVHACVGLPLFAGQNLIGALTLDGMQPDQFDVFSDEELRLIAALAAGALSNALLIEQLESQNMLPGDATPFEAVKQTQMIGLSPGMTQLKKEIEIVAASDLNVLISGETGTGKELVAKAIHEASPRAVNPLVYLNCAALPESVAESELFGHVKGAFTGAISNRSGKFEMADNGTLFLDEIGELSLALQAKLLRVLQYGDIQRVGDDRCLRVDVRVLAATNRDLREEVLAGRFRADLFHRLSVFPLSVPPLRERGDDVILLAGYFCEQCRLRQGLSRVVLSAGARNLLQHYSFPGNVRELEHAIHRAVVLARATRSGDEVILEAQHFAFPEVTLPTPEVAAVPVVKQNLREATEAFQRETIRQALAQNHHNWAACARMLETDVANLHRLAKRLGLKD</sequence>
<feature type="chain" id="PRO_0000081153" description="Anaerobic nitric oxide reductase transcription regulator NorR">
    <location>
        <begin position="1"/>
        <end position="504"/>
    </location>
</feature>
<feature type="domain" description="Sigma-54 factor interaction">
    <location>
        <begin position="187"/>
        <end position="416"/>
    </location>
</feature>
<feature type="DNA-binding region" description="H-T-H motif" evidence="1">
    <location>
        <begin position="479"/>
        <end position="498"/>
    </location>
</feature>
<feature type="region of interest" description="NO sensor or transducer" evidence="5">
    <location>
        <begin position="1"/>
        <end position="186"/>
    </location>
</feature>
<feature type="binding site" evidence="2">
    <location>
        <begin position="215"/>
        <end position="222"/>
    </location>
    <ligand>
        <name>ATP</name>
        <dbReference type="ChEBI" id="CHEBI:30616"/>
    </ligand>
</feature>
<feature type="binding site" evidence="2">
    <location>
        <begin position="278"/>
        <end position="287"/>
    </location>
    <ligand>
        <name>ATP</name>
        <dbReference type="ChEBI" id="CHEBI:30616"/>
    </ligand>
</feature>
<feature type="modified residue" description="4-aspartylphosphate" evidence="1">
    <location>
        <position position="57"/>
    </location>
</feature>
<accession>P37013</accession>
<accession>Q2MAC0</accession>
<accession>Q46875</accession>
<accession>Q46876</accession>
<reference key="1">
    <citation type="journal article" date="1994" name="DNA Seq.">
        <title>DNA sequence of a gene in Escherichia coli encoding a putative tripartite transcription factor with receiver, ATPase and DNA binding domains.</title>
        <authorList>
            <person name="Ramseier T.M."/>
            <person name="Figge R.M."/>
            <person name="Saier M.H. Jr."/>
        </authorList>
    </citation>
    <scope>NUCLEOTIDE SEQUENCE [GENOMIC DNA]</scope>
    <source>
        <strain>K12</strain>
    </source>
</reference>
<reference key="2">
    <citation type="submission" date="1994-02" db="EMBL/GenBank/DDBJ databases">
        <title>Sequencing and characterization of the downstream region of hydA in Escherichia coli.</title>
        <authorList>
            <person name="Yano K."/>
            <person name="Ikebukuro K."/>
            <person name="Takada Y."/>
            <person name="Tomiyama M."/>
            <person name="Karube I."/>
        </authorList>
    </citation>
    <scope>NUCLEOTIDE SEQUENCE [GENOMIC DNA]</scope>
    <source>
        <strain>K12</strain>
    </source>
</reference>
<reference key="3">
    <citation type="journal article" date="1997" name="Science">
        <title>The complete genome sequence of Escherichia coli K-12.</title>
        <authorList>
            <person name="Blattner F.R."/>
            <person name="Plunkett G. III"/>
            <person name="Bloch C.A."/>
            <person name="Perna N.T."/>
            <person name="Burland V."/>
            <person name="Riley M."/>
            <person name="Collado-Vides J."/>
            <person name="Glasner J.D."/>
            <person name="Rode C.K."/>
            <person name="Mayhew G.F."/>
            <person name="Gregor J."/>
            <person name="Davis N.W."/>
            <person name="Kirkpatrick H.A."/>
            <person name="Goeden M.A."/>
            <person name="Rose D.J."/>
            <person name="Mau B."/>
            <person name="Shao Y."/>
        </authorList>
    </citation>
    <scope>NUCLEOTIDE SEQUENCE [LARGE SCALE GENOMIC DNA]</scope>
    <source>
        <strain>K12 / MG1655 / ATCC 47076</strain>
    </source>
</reference>
<reference key="4">
    <citation type="journal article" date="2006" name="Mol. Syst. Biol.">
        <title>Highly accurate genome sequences of Escherichia coli K-12 strains MG1655 and W3110.</title>
        <authorList>
            <person name="Hayashi K."/>
            <person name="Morooka N."/>
            <person name="Yamamoto Y."/>
            <person name="Fujita K."/>
            <person name="Isono K."/>
            <person name="Choi S."/>
            <person name="Ohtsubo E."/>
            <person name="Baba T."/>
            <person name="Wanner B.L."/>
            <person name="Mori H."/>
            <person name="Horiuchi T."/>
        </authorList>
    </citation>
    <scope>NUCLEOTIDE SEQUENCE [LARGE SCALE GENOMIC DNA]</scope>
    <source>
        <strain>K12 / W3110 / ATCC 27325 / DSM 5911</strain>
    </source>
</reference>
<reference key="5">
    <citation type="journal article" date="2002" name="J. Biol. Chem.">
        <title>Flavorubredoxin, an inducible catalyst for nitric oxide reduction and detoxification in Escherichia coli.</title>
        <authorList>
            <person name="Gardner A.M."/>
            <person name="Helmick R.A."/>
            <person name="Gardner P.R."/>
        </authorList>
    </citation>
    <scope>ROLE IN NORV AND NORW EXPRESSION</scope>
    <source>
        <strain>K12 / AB1157</strain>
    </source>
</reference>
<reference key="6">
    <citation type="journal article" date="2003" name="FEMS Microbiol. Lett.">
        <title>Regulation of the flavorubredoxin nitric oxide reductase gene in Escherichia coli: nitrate repression, nitrite induction, and possible post-transcription control.</title>
        <authorList>
            <person name="da Costa P.N."/>
            <person name="Teixeira M."/>
            <person name="Saraiva L.M."/>
        </authorList>
    </citation>
    <scope>ROLE IN NORV AND NORW EXPRESSION</scope>
    <source>
        <strain>K12</strain>
    </source>
</reference>
<reference key="7">
    <citation type="journal article" date="2003" name="J. Biol. Chem.">
        <title>Regulation of the nitric oxide reduction operon (norRVW) in Escherichia coli: role of NorR and sigma 54 in the nitric oxide stress response.</title>
        <authorList>
            <person name="Gardner A.M."/>
            <person name="Gessner C.R."/>
            <person name="Gardner P.R."/>
        </authorList>
    </citation>
    <scope>CHARACTERIZATION</scope>
    <scope>REQUIREMENT OF SIGMA 54 FOR TRANSCRIPTIONAL ACTIVATION</scope>
    <source>
        <strain>K12 / AB1157</strain>
    </source>
</reference>
<reference key="8">
    <citation type="journal article" date="2004" name="J. Bacteriol.">
        <title>DNA binding activity of the Escherichia coli nitric oxide sensor NorR suggests a conserved target sequence in diverse proteobacteria.</title>
        <authorList>
            <person name="Tucker N.P."/>
            <person name="D'Autreaux B."/>
            <person name="Studholme D.J."/>
            <person name="Spiro S."/>
            <person name="Dixon R."/>
        </authorList>
    </citation>
    <scope>DNA-BINDING</scope>
    <source>
        <strain>K12 / MC4100 / ATCC 35695 / DSM 6574</strain>
    </source>
</reference>
<evidence type="ECO:0000250" key="1"/>
<evidence type="ECO:0000255" key="2"/>
<evidence type="ECO:0000269" key="3">
    <source>
    </source>
</evidence>
<evidence type="ECO:0000269" key="4">
    <source>
    </source>
</evidence>
<evidence type="ECO:0000305" key="5"/>